<sequence>MAQDIISTIGDLVKWIIDTVNKFTKK</sequence>
<organism>
    <name type="scientific">Staphylococcus aureus (strain Mu50 / ATCC 700699)</name>
    <dbReference type="NCBI Taxonomy" id="158878"/>
    <lineage>
        <taxon>Bacteria</taxon>
        <taxon>Bacillati</taxon>
        <taxon>Bacillota</taxon>
        <taxon>Bacilli</taxon>
        <taxon>Bacillales</taxon>
        <taxon>Staphylococcaceae</taxon>
        <taxon>Staphylococcus</taxon>
    </lineage>
</organism>
<comment type="function">
    <text evidence="1">Lyses erythrocytes and many other mammalian cells.</text>
</comment>
<comment type="subcellular location">
    <subcellularLocation>
        <location evidence="1">Secreted</location>
    </subcellularLocation>
    <subcellularLocation>
        <location evidence="1">Host cell membrane</location>
    </subcellularLocation>
    <text evidence="1">In infected cells, it is found in the membrane.</text>
</comment>
<comment type="similarity">
    <text evidence="2">Belongs to the delta-lysin family.</text>
</comment>
<comment type="sequence caution" evidence="2">
    <conflict type="erroneous initiation">
        <sequence resource="EMBL-CDS" id="BAB58197"/>
    </conflict>
</comment>
<accession>P0A0M1</accession>
<accession>P01506</accession>
<gene>
    <name type="primary">hld</name>
    <name type="ordered locus">SAV2035</name>
</gene>
<proteinExistence type="inferred from homology"/>
<feature type="peptide" id="PRO_0000035638" description="Delta-hemolysin">
    <location>
        <begin position="1"/>
        <end position="26"/>
    </location>
</feature>
<feature type="modified residue" description="N-formylmethionine" evidence="1">
    <location>
        <position position="1"/>
    </location>
</feature>
<evidence type="ECO:0000250" key="1"/>
<evidence type="ECO:0000305" key="2"/>
<protein>
    <recommendedName>
        <fullName>Delta-hemolysin</fullName>
        <shortName>Delta-lysin</shortName>
    </recommendedName>
    <alternativeName>
        <fullName>Delta-toxin</fullName>
    </alternativeName>
</protein>
<reference key="1">
    <citation type="journal article" date="2001" name="Lancet">
        <title>Whole genome sequencing of meticillin-resistant Staphylococcus aureus.</title>
        <authorList>
            <person name="Kuroda M."/>
            <person name="Ohta T."/>
            <person name="Uchiyama I."/>
            <person name="Baba T."/>
            <person name="Yuzawa H."/>
            <person name="Kobayashi I."/>
            <person name="Cui L."/>
            <person name="Oguchi A."/>
            <person name="Aoki K."/>
            <person name="Nagai Y."/>
            <person name="Lian J.-Q."/>
            <person name="Ito T."/>
            <person name="Kanamori M."/>
            <person name="Matsumaru H."/>
            <person name="Maruyama A."/>
            <person name="Murakami H."/>
            <person name="Hosoyama A."/>
            <person name="Mizutani-Ui Y."/>
            <person name="Takahashi N.K."/>
            <person name="Sawano T."/>
            <person name="Inoue R."/>
            <person name="Kaito C."/>
            <person name="Sekimizu K."/>
            <person name="Hirakawa H."/>
            <person name="Kuhara S."/>
            <person name="Goto S."/>
            <person name="Yabuzaki J."/>
            <person name="Kanehisa M."/>
            <person name="Yamashita A."/>
            <person name="Oshima K."/>
            <person name="Furuya K."/>
            <person name="Yoshino C."/>
            <person name="Shiba T."/>
            <person name="Hattori M."/>
            <person name="Ogasawara N."/>
            <person name="Hayashi H."/>
            <person name="Hiramatsu K."/>
        </authorList>
    </citation>
    <scope>NUCLEOTIDE SEQUENCE [LARGE SCALE GENOMIC DNA]</scope>
    <source>
        <strain>Mu50 / ATCC 700699</strain>
    </source>
</reference>
<name>HLD_STAAM</name>
<dbReference type="EMBL" id="BA000017">
    <property type="protein sequence ID" value="BAB58197.1"/>
    <property type="status" value="ALT_INIT"/>
    <property type="molecule type" value="Genomic_DNA"/>
</dbReference>
<dbReference type="BMRB" id="P0A0M1"/>
<dbReference type="SMR" id="P0A0M1"/>
<dbReference type="KEGG" id="sav:SAV2035"/>
<dbReference type="HOGENOM" id="CLU_3222291_0_0_9"/>
<dbReference type="Proteomes" id="UP000002481">
    <property type="component" value="Chromosome"/>
</dbReference>
<dbReference type="GO" id="GO:0005576">
    <property type="term" value="C:extracellular region"/>
    <property type="evidence" value="ECO:0007669"/>
    <property type="project" value="UniProtKB-SubCell"/>
</dbReference>
<dbReference type="GO" id="GO:0020002">
    <property type="term" value="C:host cell plasma membrane"/>
    <property type="evidence" value="ECO:0007669"/>
    <property type="project" value="UniProtKB-SubCell"/>
</dbReference>
<dbReference type="GO" id="GO:0016020">
    <property type="term" value="C:membrane"/>
    <property type="evidence" value="ECO:0007669"/>
    <property type="project" value="UniProtKB-KW"/>
</dbReference>
<dbReference type="GO" id="GO:0090729">
    <property type="term" value="F:toxin activity"/>
    <property type="evidence" value="ECO:0007669"/>
    <property type="project" value="UniProtKB-KW"/>
</dbReference>
<dbReference type="GO" id="GO:0019836">
    <property type="term" value="P:symbiont-mediated hemolysis of host erythrocyte"/>
    <property type="evidence" value="ECO:0007669"/>
    <property type="project" value="InterPro"/>
</dbReference>
<dbReference type="InterPro" id="IPR008034">
    <property type="entry name" value="Delta_lysin"/>
</dbReference>
<dbReference type="NCBIfam" id="NF011336">
    <property type="entry name" value="PRK14752.1-1"/>
    <property type="match status" value="1"/>
</dbReference>
<dbReference type="NCBIfam" id="NF011338">
    <property type="entry name" value="PRK14752.1-4"/>
    <property type="match status" value="1"/>
</dbReference>
<dbReference type="Pfam" id="PF05372">
    <property type="entry name" value="Delta_lysin"/>
    <property type="match status" value="1"/>
</dbReference>
<keyword id="KW-0204">Cytolysis</keyword>
<keyword id="KW-0291">Formylation</keyword>
<keyword id="KW-0354">Hemolysis</keyword>
<keyword id="KW-1032">Host cell membrane</keyword>
<keyword id="KW-1043">Host membrane</keyword>
<keyword id="KW-0472">Membrane</keyword>
<keyword id="KW-0964">Secreted</keyword>
<keyword id="KW-0800">Toxin</keyword>
<keyword id="KW-0812">Transmembrane</keyword>
<keyword id="KW-0843">Virulence</keyword>